<keyword id="KW-0678">Repressor</keyword>
<keyword id="KW-0687">Ribonucleoprotein</keyword>
<keyword id="KW-0689">Ribosomal protein</keyword>
<keyword id="KW-0694">RNA-binding</keyword>
<keyword id="KW-0699">rRNA-binding</keyword>
<keyword id="KW-0810">Translation regulation</keyword>
<keyword id="KW-0820">tRNA-binding</keyword>
<proteinExistence type="inferred from homology"/>
<protein>
    <recommendedName>
        <fullName evidence="1">Large ribosomal subunit protein uL1</fullName>
    </recommendedName>
    <alternativeName>
        <fullName evidence="2">50S ribosomal protein L1</fullName>
    </alternativeName>
</protein>
<evidence type="ECO:0000255" key="1">
    <source>
        <dbReference type="HAMAP-Rule" id="MF_01318"/>
    </source>
</evidence>
<evidence type="ECO:0000305" key="2"/>
<dbReference type="EMBL" id="AP006841">
    <property type="protein sequence ID" value="BAD50938.1"/>
    <property type="molecule type" value="Genomic_DNA"/>
</dbReference>
<dbReference type="RefSeq" id="WP_005782161.1">
    <property type="nucleotide sequence ID" value="NZ_UYXF01000007.1"/>
</dbReference>
<dbReference type="RefSeq" id="YP_101472.1">
    <property type="nucleotide sequence ID" value="NC_006347.1"/>
</dbReference>
<dbReference type="SMR" id="Q64NJ4"/>
<dbReference type="STRING" id="295405.BF4195"/>
<dbReference type="GeneID" id="93105338"/>
<dbReference type="KEGG" id="bfr:BF4195"/>
<dbReference type="PATRIC" id="fig|295405.11.peg.4050"/>
<dbReference type="HOGENOM" id="CLU_062853_0_0_10"/>
<dbReference type="OrthoDB" id="9803740at2"/>
<dbReference type="Proteomes" id="UP000002197">
    <property type="component" value="Chromosome"/>
</dbReference>
<dbReference type="GO" id="GO:0015934">
    <property type="term" value="C:large ribosomal subunit"/>
    <property type="evidence" value="ECO:0007669"/>
    <property type="project" value="InterPro"/>
</dbReference>
<dbReference type="GO" id="GO:0019843">
    <property type="term" value="F:rRNA binding"/>
    <property type="evidence" value="ECO:0007669"/>
    <property type="project" value="UniProtKB-UniRule"/>
</dbReference>
<dbReference type="GO" id="GO:0003735">
    <property type="term" value="F:structural constituent of ribosome"/>
    <property type="evidence" value="ECO:0007669"/>
    <property type="project" value="InterPro"/>
</dbReference>
<dbReference type="GO" id="GO:0000049">
    <property type="term" value="F:tRNA binding"/>
    <property type="evidence" value="ECO:0007669"/>
    <property type="project" value="UniProtKB-KW"/>
</dbReference>
<dbReference type="GO" id="GO:0006417">
    <property type="term" value="P:regulation of translation"/>
    <property type="evidence" value="ECO:0007669"/>
    <property type="project" value="UniProtKB-KW"/>
</dbReference>
<dbReference type="GO" id="GO:0006412">
    <property type="term" value="P:translation"/>
    <property type="evidence" value="ECO:0007669"/>
    <property type="project" value="UniProtKB-UniRule"/>
</dbReference>
<dbReference type="CDD" id="cd00403">
    <property type="entry name" value="Ribosomal_L1"/>
    <property type="match status" value="1"/>
</dbReference>
<dbReference type="FunFam" id="3.40.50.790:FF:000001">
    <property type="entry name" value="50S ribosomal protein L1"/>
    <property type="match status" value="1"/>
</dbReference>
<dbReference type="Gene3D" id="3.30.190.20">
    <property type="match status" value="1"/>
</dbReference>
<dbReference type="Gene3D" id="3.40.50.790">
    <property type="match status" value="1"/>
</dbReference>
<dbReference type="HAMAP" id="MF_01318_B">
    <property type="entry name" value="Ribosomal_uL1_B"/>
    <property type="match status" value="1"/>
</dbReference>
<dbReference type="InterPro" id="IPR005878">
    <property type="entry name" value="Ribosom_uL1_bac-type"/>
</dbReference>
<dbReference type="InterPro" id="IPR002143">
    <property type="entry name" value="Ribosomal_uL1"/>
</dbReference>
<dbReference type="InterPro" id="IPR023674">
    <property type="entry name" value="Ribosomal_uL1-like"/>
</dbReference>
<dbReference type="InterPro" id="IPR028364">
    <property type="entry name" value="Ribosomal_uL1/biogenesis"/>
</dbReference>
<dbReference type="InterPro" id="IPR016095">
    <property type="entry name" value="Ribosomal_uL1_3-a/b-sand"/>
</dbReference>
<dbReference type="InterPro" id="IPR023673">
    <property type="entry name" value="Ribosomal_uL1_CS"/>
</dbReference>
<dbReference type="NCBIfam" id="TIGR01169">
    <property type="entry name" value="rplA_bact"/>
    <property type="match status" value="1"/>
</dbReference>
<dbReference type="PANTHER" id="PTHR36427">
    <property type="entry name" value="54S RIBOSOMAL PROTEIN L1, MITOCHONDRIAL"/>
    <property type="match status" value="1"/>
</dbReference>
<dbReference type="PANTHER" id="PTHR36427:SF3">
    <property type="entry name" value="LARGE RIBOSOMAL SUBUNIT PROTEIN UL1M"/>
    <property type="match status" value="1"/>
</dbReference>
<dbReference type="Pfam" id="PF00687">
    <property type="entry name" value="Ribosomal_L1"/>
    <property type="match status" value="1"/>
</dbReference>
<dbReference type="PIRSF" id="PIRSF002155">
    <property type="entry name" value="Ribosomal_L1"/>
    <property type="match status" value="1"/>
</dbReference>
<dbReference type="SUPFAM" id="SSF56808">
    <property type="entry name" value="Ribosomal protein L1"/>
    <property type="match status" value="1"/>
</dbReference>
<dbReference type="PROSITE" id="PS01199">
    <property type="entry name" value="RIBOSOMAL_L1"/>
    <property type="match status" value="1"/>
</dbReference>
<feature type="chain" id="PRO_0000125611" description="Large ribosomal subunit protein uL1">
    <location>
        <begin position="1"/>
        <end position="232"/>
    </location>
</feature>
<organism>
    <name type="scientific">Bacteroides fragilis (strain YCH46)</name>
    <dbReference type="NCBI Taxonomy" id="295405"/>
    <lineage>
        <taxon>Bacteria</taxon>
        <taxon>Pseudomonadati</taxon>
        <taxon>Bacteroidota</taxon>
        <taxon>Bacteroidia</taxon>
        <taxon>Bacteroidales</taxon>
        <taxon>Bacteroidaceae</taxon>
        <taxon>Bacteroides</taxon>
    </lineage>
</organism>
<sequence length="232" mass="24834">MGKLTKNQKLAAGKIEAGKAYSLKEAASLVKEITFTKFDASLDIDVRLGVDPRKANQMVRGVVSLPHGTGKQVRVLVLCTPDAEAAAKEAGADYVGLDEYIEKIKGGWTDIDVIITMPSIMGKIGALGRVLGPRGLMPNPKSGTVTMDVAKAVREVKQGKIDFKVDKSGIVHTSIGKVSFTAEQIRDNAKEFISTLNKLKPTAAKGTYIKSIYLSSTMSAGIKIDPKSVEEI</sequence>
<comment type="function">
    <text evidence="1">Binds directly to 23S rRNA. The L1 stalk is quite mobile in the ribosome, and is involved in E site tRNA release.</text>
</comment>
<comment type="function">
    <text evidence="1">Protein L1 is also a translational repressor protein, it controls the translation of the L11 operon by binding to its mRNA.</text>
</comment>
<comment type="subunit">
    <text evidence="1">Part of the 50S ribosomal subunit.</text>
</comment>
<comment type="similarity">
    <text evidence="1">Belongs to the universal ribosomal protein uL1 family.</text>
</comment>
<gene>
    <name evidence="1" type="primary">rplA</name>
    <name type="ordered locus">BF4195</name>
</gene>
<accession>Q64NJ4</accession>
<reference key="1">
    <citation type="journal article" date="2004" name="Proc. Natl. Acad. Sci. U.S.A.">
        <title>Genomic analysis of Bacteroides fragilis reveals extensive DNA inversions regulating cell surface adaptation.</title>
        <authorList>
            <person name="Kuwahara T."/>
            <person name="Yamashita A."/>
            <person name="Hirakawa H."/>
            <person name="Nakayama H."/>
            <person name="Toh H."/>
            <person name="Okada N."/>
            <person name="Kuhara S."/>
            <person name="Hattori M."/>
            <person name="Hayashi T."/>
            <person name="Ohnishi Y."/>
        </authorList>
    </citation>
    <scope>NUCLEOTIDE SEQUENCE [LARGE SCALE GENOMIC DNA]</scope>
    <source>
        <strain>YCH46</strain>
    </source>
</reference>
<name>RL1_BACFR</name>